<proteinExistence type="inferred from homology"/>
<sequence>MSRVCQVTGKKPMVGNNRSHAKNATRRRFLPNLQNHRFWLEGEKRFVKLRISTKGMRIIDKKGIEVVVAELRARGEKV</sequence>
<accession>B1KL04</accession>
<evidence type="ECO:0000255" key="1">
    <source>
        <dbReference type="HAMAP-Rule" id="MF_00373"/>
    </source>
</evidence>
<evidence type="ECO:0000256" key="2">
    <source>
        <dbReference type="SAM" id="MobiDB-lite"/>
    </source>
</evidence>
<evidence type="ECO:0000305" key="3"/>
<feature type="chain" id="PRO_1000121689" description="Large ribosomal subunit protein bL28">
    <location>
        <begin position="1"/>
        <end position="78"/>
    </location>
</feature>
<feature type="region of interest" description="Disordered" evidence="2">
    <location>
        <begin position="1"/>
        <end position="21"/>
    </location>
</feature>
<reference key="1">
    <citation type="submission" date="2008-02" db="EMBL/GenBank/DDBJ databases">
        <title>Complete sequence of Shewanella woodyi ATCC 51908.</title>
        <authorList>
            <consortium name="US DOE Joint Genome Institute"/>
            <person name="Copeland A."/>
            <person name="Lucas S."/>
            <person name="Lapidus A."/>
            <person name="Glavina del Rio T."/>
            <person name="Dalin E."/>
            <person name="Tice H."/>
            <person name="Bruce D."/>
            <person name="Goodwin L."/>
            <person name="Pitluck S."/>
            <person name="Sims D."/>
            <person name="Brettin T."/>
            <person name="Detter J.C."/>
            <person name="Han C."/>
            <person name="Kuske C.R."/>
            <person name="Schmutz J."/>
            <person name="Larimer F."/>
            <person name="Land M."/>
            <person name="Hauser L."/>
            <person name="Kyrpides N."/>
            <person name="Lykidis A."/>
            <person name="Zhao J.-S."/>
            <person name="Richardson P."/>
        </authorList>
    </citation>
    <scope>NUCLEOTIDE SEQUENCE [LARGE SCALE GENOMIC DNA]</scope>
    <source>
        <strain>ATCC 51908 / MS32</strain>
    </source>
</reference>
<name>RL28_SHEWM</name>
<protein>
    <recommendedName>
        <fullName evidence="1">Large ribosomal subunit protein bL28</fullName>
    </recommendedName>
    <alternativeName>
        <fullName evidence="3">50S ribosomal protein L28</fullName>
    </alternativeName>
</protein>
<keyword id="KW-1185">Reference proteome</keyword>
<keyword id="KW-0687">Ribonucleoprotein</keyword>
<keyword id="KW-0689">Ribosomal protein</keyword>
<comment type="similarity">
    <text evidence="1">Belongs to the bacterial ribosomal protein bL28 family.</text>
</comment>
<organism>
    <name type="scientific">Shewanella woodyi (strain ATCC 51908 / MS32)</name>
    <dbReference type="NCBI Taxonomy" id="392500"/>
    <lineage>
        <taxon>Bacteria</taxon>
        <taxon>Pseudomonadati</taxon>
        <taxon>Pseudomonadota</taxon>
        <taxon>Gammaproteobacteria</taxon>
        <taxon>Alteromonadales</taxon>
        <taxon>Shewanellaceae</taxon>
        <taxon>Shewanella</taxon>
    </lineage>
</organism>
<gene>
    <name evidence="1" type="primary">rpmB</name>
    <name type="ordered locus">Swoo_4560</name>
</gene>
<dbReference type="EMBL" id="CP000961">
    <property type="protein sequence ID" value="ACA88810.1"/>
    <property type="molecule type" value="Genomic_DNA"/>
</dbReference>
<dbReference type="RefSeq" id="WP_012327135.1">
    <property type="nucleotide sequence ID" value="NC_010506.1"/>
</dbReference>
<dbReference type="SMR" id="B1KL04"/>
<dbReference type="STRING" id="392500.Swoo_4560"/>
<dbReference type="KEGG" id="swd:Swoo_4560"/>
<dbReference type="eggNOG" id="COG0227">
    <property type="taxonomic scope" value="Bacteria"/>
</dbReference>
<dbReference type="HOGENOM" id="CLU_064548_3_1_6"/>
<dbReference type="Proteomes" id="UP000002168">
    <property type="component" value="Chromosome"/>
</dbReference>
<dbReference type="GO" id="GO:0022625">
    <property type="term" value="C:cytosolic large ribosomal subunit"/>
    <property type="evidence" value="ECO:0007669"/>
    <property type="project" value="TreeGrafter"/>
</dbReference>
<dbReference type="GO" id="GO:0003735">
    <property type="term" value="F:structural constituent of ribosome"/>
    <property type="evidence" value="ECO:0007669"/>
    <property type="project" value="InterPro"/>
</dbReference>
<dbReference type="GO" id="GO:0006412">
    <property type="term" value="P:translation"/>
    <property type="evidence" value="ECO:0007669"/>
    <property type="project" value="UniProtKB-UniRule"/>
</dbReference>
<dbReference type="FunFam" id="2.30.170.40:FF:000001">
    <property type="entry name" value="50S ribosomal protein L28"/>
    <property type="match status" value="1"/>
</dbReference>
<dbReference type="Gene3D" id="2.30.170.40">
    <property type="entry name" value="Ribosomal protein L28/L24"/>
    <property type="match status" value="1"/>
</dbReference>
<dbReference type="HAMAP" id="MF_00373">
    <property type="entry name" value="Ribosomal_bL28"/>
    <property type="match status" value="1"/>
</dbReference>
<dbReference type="InterPro" id="IPR026569">
    <property type="entry name" value="Ribosomal_bL28"/>
</dbReference>
<dbReference type="InterPro" id="IPR034704">
    <property type="entry name" value="Ribosomal_bL28/bL31-like_sf"/>
</dbReference>
<dbReference type="InterPro" id="IPR001383">
    <property type="entry name" value="Ribosomal_bL28_bact-type"/>
</dbReference>
<dbReference type="InterPro" id="IPR037147">
    <property type="entry name" value="Ribosomal_bL28_sf"/>
</dbReference>
<dbReference type="NCBIfam" id="TIGR00009">
    <property type="entry name" value="L28"/>
    <property type="match status" value="1"/>
</dbReference>
<dbReference type="PANTHER" id="PTHR13528">
    <property type="entry name" value="39S RIBOSOMAL PROTEIN L28, MITOCHONDRIAL"/>
    <property type="match status" value="1"/>
</dbReference>
<dbReference type="PANTHER" id="PTHR13528:SF2">
    <property type="entry name" value="LARGE RIBOSOMAL SUBUNIT PROTEIN BL28M"/>
    <property type="match status" value="1"/>
</dbReference>
<dbReference type="Pfam" id="PF00830">
    <property type="entry name" value="Ribosomal_L28"/>
    <property type="match status" value="1"/>
</dbReference>
<dbReference type="SUPFAM" id="SSF143800">
    <property type="entry name" value="L28p-like"/>
    <property type="match status" value="1"/>
</dbReference>